<proteinExistence type="inferred from homology"/>
<accession>Q8DPU5</accession>
<dbReference type="EMBL" id="AE007317">
    <property type="protein sequence ID" value="AAK99802.1"/>
    <property type="molecule type" value="Genomic_DNA"/>
</dbReference>
<dbReference type="PIR" id="F97996">
    <property type="entry name" value="F97996"/>
</dbReference>
<dbReference type="RefSeq" id="NP_358592.1">
    <property type="nucleotide sequence ID" value="NC_003098.1"/>
</dbReference>
<dbReference type="RefSeq" id="WP_000653405.1">
    <property type="nucleotide sequence ID" value="NC_003098.1"/>
</dbReference>
<dbReference type="SMR" id="Q8DPU5"/>
<dbReference type="STRING" id="171101.spr0998"/>
<dbReference type="KEGG" id="spr:spr0998"/>
<dbReference type="PATRIC" id="fig|171101.6.peg.1086"/>
<dbReference type="eggNOG" id="COG2344">
    <property type="taxonomic scope" value="Bacteria"/>
</dbReference>
<dbReference type="HOGENOM" id="CLU_061534_1_1_9"/>
<dbReference type="Proteomes" id="UP000000586">
    <property type="component" value="Chromosome"/>
</dbReference>
<dbReference type="GO" id="GO:0005737">
    <property type="term" value="C:cytoplasm"/>
    <property type="evidence" value="ECO:0007669"/>
    <property type="project" value="UniProtKB-SubCell"/>
</dbReference>
<dbReference type="GO" id="GO:0003677">
    <property type="term" value="F:DNA binding"/>
    <property type="evidence" value="ECO:0007669"/>
    <property type="project" value="UniProtKB-UniRule"/>
</dbReference>
<dbReference type="GO" id="GO:0003700">
    <property type="term" value="F:DNA-binding transcription factor activity"/>
    <property type="evidence" value="ECO:0007669"/>
    <property type="project" value="UniProtKB-UniRule"/>
</dbReference>
<dbReference type="GO" id="GO:0045892">
    <property type="term" value="P:negative regulation of DNA-templated transcription"/>
    <property type="evidence" value="ECO:0007669"/>
    <property type="project" value="InterPro"/>
</dbReference>
<dbReference type="GO" id="GO:0051775">
    <property type="term" value="P:response to redox state"/>
    <property type="evidence" value="ECO:0007669"/>
    <property type="project" value="InterPro"/>
</dbReference>
<dbReference type="Gene3D" id="3.40.50.720">
    <property type="entry name" value="NAD(P)-binding Rossmann-like Domain"/>
    <property type="match status" value="1"/>
</dbReference>
<dbReference type="Gene3D" id="1.10.10.10">
    <property type="entry name" value="Winged helix-like DNA-binding domain superfamily/Winged helix DNA-binding domain"/>
    <property type="match status" value="1"/>
</dbReference>
<dbReference type="HAMAP" id="MF_01131">
    <property type="entry name" value="Rex"/>
    <property type="match status" value="1"/>
</dbReference>
<dbReference type="InterPro" id="IPR003781">
    <property type="entry name" value="CoA-bd"/>
</dbReference>
<dbReference type="InterPro" id="IPR036291">
    <property type="entry name" value="NAD(P)-bd_dom_sf"/>
</dbReference>
<dbReference type="InterPro" id="IPR009718">
    <property type="entry name" value="Rex_DNA-bd_C_dom"/>
</dbReference>
<dbReference type="InterPro" id="IPR022876">
    <property type="entry name" value="Tscrpt_rep_Rex"/>
</dbReference>
<dbReference type="InterPro" id="IPR036388">
    <property type="entry name" value="WH-like_DNA-bd_sf"/>
</dbReference>
<dbReference type="InterPro" id="IPR036390">
    <property type="entry name" value="WH_DNA-bd_sf"/>
</dbReference>
<dbReference type="NCBIfam" id="NF003988">
    <property type="entry name" value="PRK05472.1-1"/>
    <property type="match status" value="1"/>
</dbReference>
<dbReference type="NCBIfam" id="NF003989">
    <property type="entry name" value="PRK05472.1-3"/>
    <property type="match status" value="1"/>
</dbReference>
<dbReference type="NCBIfam" id="NF003991">
    <property type="entry name" value="PRK05472.1-5"/>
    <property type="match status" value="1"/>
</dbReference>
<dbReference type="NCBIfam" id="NF003994">
    <property type="entry name" value="PRK05472.2-3"/>
    <property type="match status" value="1"/>
</dbReference>
<dbReference type="NCBIfam" id="NF003995">
    <property type="entry name" value="PRK05472.2-4"/>
    <property type="match status" value="1"/>
</dbReference>
<dbReference type="NCBIfam" id="NF003996">
    <property type="entry name" value="PRK05472.2-5"/>
    <property type="match status" value="1"/>
</dbReference>
<dbReference type="PANTHER" id="PTHR35786">
    <property type="entry name" value="REDOX-SENSING TRANSCRIPTIONAL REPRESSOR REX"/>
    <property type="match status" value="1"/>
</dbReference>
<dbReference type="PANTHER" id="PTHR35786:SF1">
    <property type="entry name" value="REDOX-SENSING TRANSCRIPTIONAL REPRESSOR REX 1"/>
    <property type="match status" value="1"/>
</dbReference>
<dbReference type="Pfam" id="PF02629">
    <property type="entry name" value="CoA_binding"/>
    <property type="match status" value="1"/>
</dbReference>
<dbReference type="Pfam" id="PF06971">
    <property type="entry name" value="Put_DNA-bind_N"/>
    <property type="match status" value="1"/>
</dbReference>
<dbReference type="SMART" id="SM00881">
    <property type="entry name" value="CoA_binding"/>
    <property type="match status" value="1"/>
</dbReference>
<dbReference type="SUPFAM" id="SSF51735">
    <property type="entry name" value="NAD(P)-binding Rossmann-fold domains"/>
    <property type="match status" value="1"/>
</dbReference>
<dbReference type="SUPFAM" id="SSF46785">
    <property type="entry name" value="Winged helix' DNA-binding domain"/>
    <property type="match status" value="1"/>
</dbReference>
<reference key="1">
    <citation type="journal article" date="2001" name="J. Bacteriol.">
        <title>Genome of the bacterium Streptococcus pneumoniae strain R6.</title>
        <authorList>
            <person name="Hoskins J."/>
            <person name="Alborn W.E. Jr."/>
            <person name="Arnold J."/>
            <person name="Blaszczak L.C."/>
            <person name="Burgett S."/>
            <person name="DeHoff B.S."/>
            <person name="Estrem S.T."/>
            <person name="Fritz L."/>
            <person name="Fu D.-J."/>
            <person name="Fuller W."/>
            <person name="Geringer C."/>
            <person name="Gilmour R."/>
            <person name="Glass J.S."/>
            <person name="Khoja H."/>
            <person name="Kraft A.R."/>
            <person name="Lagace R.E."/>
            <person name="LeBlanc D.J."/>
            <person name="Lee L.N."/>
            <person name="Lefkowitz E.J."/>
            <person name="Lu J."/>
            <person name="Matsushima P."/>
            <person name="McAhren S.M."/>
            <person name="McHenney M."/>
            <person name="McLeaster K."/>
            <person name="Mundy C.W."/>
            <person name="Nicas T.I."/>
            <person name="Norris F.H."/>
            <person name="O'Gara M."/>
            <person name="Peery R.B."/>
            <person name="Robertson G.T."/>
            <person name="Rockey P."/>
            <person name="Sun P.-M."/>
            <person name="Winkler M.E."/>
            <person name="Yang Y."/>
            <person name="Young-Bellido M."/>
            <person name="Zhao G."/>
            <person name="Zook C.A."/>
            <person name="Baltz R.H."/>
            <person name="Jaskunas S.R."/>
            <person name="Rosteck P.R. Jr."/>
            <person name="Skatrud P.L."/>
            <person name="Glass J.I."/>
        </authorList>
    </citation>
    <scope>NUCLEOTIDE SEQUENCE [LARGE SCALE GENOMIC DNA]</scope>
    <source>
        <strain>ATCC BAA-255 / R6</strain>
    </source>
</reference>
<comment type="function">
    <text evidence="1 2">Modulates transcription in response to changes in cellular NADH/NAD(+) redox state (By similarity). Binds to the promoter of the aldehyde-alcohol dehydrogenase adhE gene. Functions as a redox-dependent repressor of adhE expression (By similarity).</text>
</comment>
<comment type="subunit">
    <text evidence="2">Homodimer.</text>
</comment>
<comment type="subcellular location">
    <subcellularLocation>
        <location evidence="2">Cytoplasm</location>
    </subcellularLocation>
</comment>
<comment type="similarity">
    <text evidence="2">Belongs to the transcriptional regulatory Rex family.</text>
</comment>
<sequence>MKDKQFAIPKATAKRLSLYYRIFKRFHAEKIERANSKQIAEAIGIDSATVRRDFSYFGELGRRGFGYDVKKLMTFFADLLNDNSITNVMLVGIGNMGHALLHYRFHERNKMKIIMAFDLDDHPEVGTQTPDGIPIYGISQIKDKIKDTDVKTAILTVPSVKSQEVANLLVDAGVKGILSFSPVHLHLPKDVVVQYVDLTSELQTLLYFMRKED</sequence>
<feature type="chain" id="PRO_0000097919" description="Redox-sensing transcriptional repressor Rex">
    <location>
        <begin position="1"/>
        <end position="213"/>
    </location>
</feature>
<feature type="DNA-binding region" description="H-T-H motif" evidence="2">
    <location>
        <begin position="18"/>
        <end position="57"/>
    </location>
</feature>
<feature type="binding site" evidence="2">
    <location>
        <begin position="92"/>
        <end position="97"/>
    </location>
    <ligand>
        <name>NAD(+)</name>
        <dbReference type="ChEBI" id="CHEBI:57540"/>
    </ligand>
</feature>
<evidence type="ECO:0000250" key="1">
    <source>
        <dbReference type="UniProtKB" id="Q04KJ6"/>
    </source>
</evidence>
<evidence type="ECO:0000255" key="2">
    <source>
        <dbReference type="HAMAP-Rule" id="MF_01131"/>
    </source>
</evidence>
<keyword id="KW-0963">Cytoplasm</keyword>
<keyword id="KW-0238">DNA-binding</keyword>
<keyword id="KW-0520">NAD</keyword>
<keyword id="KW-1185">Reference proteome</keyword>
<keyword id="KW-0678">Repressor</keyword>
<keyword id="KW-0804">Transcription</keyword>
<keyword id="KW-0805">Transcription regulation</keyword>
<gene>
    <name evidence="2" type="primary">rex</name>
    <name type="ordered locus">spr0998</name>
</gene>
<organism>
    <name type="scientific">Streptococcus pneumoniae (strain ATCC BAA-255 / R6)</name>
    <dbReference type="NCBI Taxonomy" id="171101"/>
    <lineage>
        <taxon>Bacteria</taxon>
        <taxon>Bacillati</taxon>
        <taxon>Bacillota</taxon>
        <taxon>Bacilli</taxon>
        <taxon>Lactobacillales</taxon>
        <taxon>Streptococcaceae</taxon>
        <taxon>Streptococcus</taxon>
    </lineage>
</organism>
<protein>
    <recommendedName>
        <fullName evidence="2">Redox-sensing transcriptional repressor Rex</fullName>
    </recommendedName>
</protein>
<name>REX_STRR6</name>